<sequence length="546" mass="57156">MAAKDIRFGEDARTRMVRGVNVLANAVKATLGPKGRNVVLEKSFGAPTITKDGVSVAKEIELADKFENMGAQMVKEVASKTNDNAGDGTTTATVLAQALIREGAKAVAAGMNPMDLKRGIDQAVKAAVVELKNISKPTTDDKAIAQVGTISANSDESIGNIIAEAMKKVGKEGVITVEEGSGLENELDVVEGMQFDRGYLSPYFINNQQSQSADLDDPFILLHDKKISNVRDLLPVLEGVAKAGKPLLIVAEEVEGEALATLVVNTIRGIVKVVAVKAPGFGDRRKAMLEDMAVLTGGTVISEEVGLALEKATIKDLGRAKKVQVSKENTTIIDGAGDSAAIESRVGQIKTQIEDTSSDYDREKLQERVAKLAGGVAVIKVGASTEIEMKEKKARVEDALHATRAAVEEGVVPGGGVALVRALVAVGNLTGANEDQTHGIQIALRAMEAPLREIVANAGEEPSVILNKVKEGTGNYGYNAANGEFGDMVEFGILDPTKVTRSALQNAASIAGLMITTEAMVADAPKKDEPAMPAGGGMGGMGGMDF</sequence>
<gene>
    <name evidence="1" type="primary">groEL</name>
    <name evidence="1" type="synonym">groL</name>
    <name type="ordered locus">XOO4288</name>
</gene>
<comment type="function">
    <text evidence="1">Together with its co-chaperonin GroES, plays an essential role in assisting protein folding. The GroEL-GroES system forms a nano-cage that allows encapsulation of the non-native substrate proteins and provides a physical environment optimized to promote and accelerate protein folding.</text>
</comment>
<comment type="catalytic activity">
    <reaction evidence="1">
        <text>ATP + H2O + a folded polypeptide = ADP + phosphate + an unfolded polypeptide.</text>
        <dbReference type="EC" id="5.6.1.7"/>
    </reaction>
</comment>
<comment type="subunit">
    <text evidence="1">Forms a cylinder of 14 subunits composed of two heptameric rings stacked back-to-back. Interacts with the co-chaperonin GroES.</text>
</comment>
<comment type="subcellular location">
    <subcellularLocation>
        <location evidence="1">Cytoplasm</location>
    </subcellularLocation>
</comment>
<comment type="similarity">
    <text evidence="1">Belongs to the chaperonin (HSP60) family.</text>
</comment>
<accession>Q5GUT1</accession>
<feature type="chain" id="PRO_0000063609" description="Chaperonin GroEL">
    <location>
        <begin position="1"/>
        <end position="546"/>
    </location>
</feature>
<feature type="region of interest" description="Disordered" evidence="2">
    <location>
        <begin position="526"/>
        <end position="546"/>
    </location>
</feature>
<feature type="compositionally biased region" description="Gly residues" evidence="2">
    <location>
        <begin position="534"/>
        <end position="546"/>
    </location>
</feature>
<feature type="binding site" evidence="1">
    <location>
        <begin position="30"/>
        <end position="33"/>
    </location>
    <ligand>
        <name>ATP</name>
        <dbReference type="ChEBI" id="CHEBI:30616"/>
    </ligand>
</feature>
<feature type="binding site" evidence="1">
    <location>
        <position position="51"/>
    </location>
    <ligand>
        <name>ATP</name>
        <dbReference type="ChEBI" id="CHEBI:30616"/>
    </ligand>
</feature>
<feature type="binding site" evidence="1">
    <location>
        <begin position="87"/>
        <end position="91"/>
    </location>
    <ligand>
        <name>ATP</name>
        <dbReference type="ChEBI" id="CHEBI:30616"/>
    </ligand>
</feature>
<feature type="binding site" evidence="1">
    <location>
        <position position="415"/>
    </location>
    <ligand>
        <name>ATP</name>
        <dbReference type="ChEBI" id="CHEBI:30616"/>
    </ligand>
</feature>
<feature type="binding site" evidence="1">
    <location>
        <begin position="479"/>
        <end position="481"/>
    </location>
    <ligand>
        <name>ATP</name>
        <dbReference type="ChEBI" id="CHEBI:30616"/>
    </ligand>
</feature>
<feature type="binding site" evidence="1">
    <location>
        <position position="495"/>
    </location>
    <ligand>
        <name>ATP</name>
        <dbReference type="ChEBI" id="CHEBI:30616"/>
    </ligand>
</feature>
<feature type="strand" evidence="3">
    <location>
        <begin position="4"/>
        <end position="8"/>
    </location>
</feature>
<feature type="helix" evidence="3">
    <location>
        <begin position="9"/>
        <end position="27"/>
    </location>
</feature>
<feature type="helix" evidence="3">
    <location>
        <begin position="28"/>
        <end position="30"/>
    </location>
</feature>
<feature type="strand" evidence="3">
    <location>
        <begin position="37"/>
        <end position="40"/>
    </location>
</feature>
<feature type="strand" evidence="3">
    <location>
        <begin position="43"/>
        <end position="46"/>
    </location>
</feature>
<feature type="strand" evidence="3">
    <location>
        <begin position="48"/>
        <end position="50"/>
    </location>
</feature>
<feature type="helix" evidence="3">
    <location>
        <begin position="53"/>
        <end position="58"/>
    </location>
</feature>
<feature type="helix" evidence="3">
    <location>
        <begin position="65"/>
        <end position="78"/>
    </location>
</feature>
<feature type="helix" evidence="3">
    <location>
        <begin position="80"/>
        <end position="83"/>
    </location>
</feature>
<feature type="strand" evidence="3">
    <location>
        <begin position="85"/>
        <end position="87"/>
    </location>
</feature>
<feature type="helix" evidence="3">
    <location>
        <begin position="89"/>
        <end position="109"/>
    </location>
</feature>
<feature type="helix" evidence="3">
    <location>
        <begin position="113"/>
        <end position="132"/>
    </location>
</feature>
<feature type="helix" evidence="3">
    <location>
        <begin position="141"/>
        <end position="151"/>
    </location>
</feature>
<feature type="helix" evidence="3">
    <location>
        <begin position="156"/>
        <end position="169"/>
    </location>
</feature>
<feature type="strand" evidence="3">
    <location>
        <begin position="175"/>
        <end position="179"/>
    </location>
</feature>
<feature type="strand" evidence="3">
    <location>
        <begin position="181"/>
        <end position="184"/>
    </location>
</feature>
<feature type="strand" evidence="3">
    <location>
        <begin position="186"/>
        <end position="196"/>
    </location>
</feature>
<feature type="strand" evidence="3">
    <location>
        <begin position="199"/>
        <end position="204"/>
    </location>
</feature>
<feature type="helix" evidence="3">
    <location>
        <begin position="208"/>
        <end position="210"/>
    </location>
</feature>
<feature type="strand" evidence="3">
    <location>
        <begin position="214"/>
        <end position="217"/>
    </location>
</feature>
<feature type="strand" evidence="3">
    <location>
        <begin position="219"/>
        <end position="225"/>
    </location>
</feature>
<feature type="turn" evidence="3">
    <location>
        <begin position="231"/>
        <end position="233"/>
    </location>
</feature>
<feature type="helix" evidence="3">
    <location>
        <begin position="234"/>
        <end position="241"/>
    </location>
</feature>
<feature type="turn" evidence="3">
    <location>
        <begin position="242"/>
        <end position="244"/>
    </location>
</feature>
<feature type="strand" evidence="3">
    <location>
        <begin position="247"/>
        <end position="252"/>
    </location>
</feature>
<feature type="helix" evidence="3">
    <location>
        <begin position="256"/>
        <end position="267"/>
    </location>
</feature>
<feature type="strand" evidence="3">
    <location>
        <begin position="273"/>
        <end position="277"/>
    </location>
</feature>
<feature type="helix" evidence="3">
    <location>
        <begin position="282"/>
        <end position="296"/>
    </location>
</feature>
<feature type="helix" evidence="3">
    <location>
        <begin position="303"/>
        <end position="305"/>
    </location>
</feature>
<feature type="helix" evidence="3">
    <location>
        <begin position="314"/>
        <end position="316"/>
    </location>
</feature>
<feature type="strand" evidence="3">
    <location>
        <begin position="318"/>
        <end position="325"/>
    </location>
</feature>
<feature type="strand" evidence="3">
    <location>
        <begin position="330"/>
        <end position="337"/>
    </location>
</feature>
<feature type="helix" evidence="3">
    <location>
        <begin position="339"/>
        <end position="353"/>
    </location>
</feature>
<feature type="helix" evidence="3">
    <location>
        <begin position="360"/>
        <end position="372"/>
    </location>
</feature>
<feature type="strand" evidence="3">
    <location>
        <begin position="376"/>
        <end position="381"/>
    </location>
</feature>
<feature type="helix" evidence="3">
    <location>
        <begin position="386"/>
        <end position="409"/>
    </location>
</feature>
<feature type="strand" evidence="3">
    <location>
        <begin position="411"/>
        <end position="413"/>
    </location>
</feature>
<feature type="turn" evidence="3">
    <location>
        <begin position="414"/>
        <end position="416"/>
    </location>
</feature>
<feature type="helix" evidence="3">
    <location>
        <begin position="417"/>
        <end position="424"/>
    </location>
</feature>
<feature type="helix" evidence="3">
    <location>
        <begin position="434"/>
        <end position="447"/>
    </location>
</feature>
<feature type="helix" evidence="3">
    <location>
        <begin position="449"/>
        <end position="458"/>
    </location>
</feature>
<feature type="helix" evidence="3">
    <location>
        <begin position="462"/>
        <end position="470"/>
    </location>
</feature>
<feature type="strand" evidence="3">
    <location>
        <begin position="476"/>
        <end position="478"/>
    </location>
</feature>
<feature type="turn" evidence="3">
    <location>
        <begin position="480"/>
        <end position="482"/>
    </location>
</feature>
<feature type="strand" evidence="3">
    <location>
        <begin position="485"/>
        <end position="487"/>
    </location>
</feature>
<feature type="turn" evidence="3">
    <location>
        <begin position="488"/>
        <end position="492"/>
    </location>
</feature>
<feature type="strand" evidence="3">
    <location>
        <begin position="494"/>
        <end position="496"/>
    </location>
</feature>
<feature type="helix" evidence="3">
    <location>
        <begin position="497"/>
        <end position="514"/>
    </location>
</feature>
<feature type="strand" evidence="3">
    <location>
        <begin position="517"/>
        <end position="523"/>
    </location>
</feature>
<dbReference type="EC" id="5.6.1.7" evidence="1"/>
<dbReference type="EMBL" id="AE013598">
    <property type="protein sequence ID" value="AAW77542.1"/>
    <property type="molecule type" value="Genomic_DNA"/>
</dbReference>
<dbReference type="PDB" id="6KFV">
    <property type="method" value="X-ray"/>
    <property type="resolution" value="3.22 A"/>
    <property type="chains" value="A/B/C/D/E/F/G/H/I/J/K/L/M/N=2-526"/>
</dbReference>
<dbReference type="PDBsum" id="6KFV"/>
<dbReference type="SMR" id="Q5GUT1"/>
<dbReference type="STRING" id="291331.XOO4288"/>
<dbReference type="KEGG" id="xoo:XOO4288"/>
<dbReference type="HOGENOM" id="CLU_016503_3_0_6"/>
<dbReference type="Proteomes" id="UP000006735">
    <property type="component" value="Chromosome"/>
</dbReference>
<dbReference type="GO" id="GO:0005737">
    <property type="term" value="C:cytoplasm"/>
    <property type="evidence" value="ECO:0007669"/>
    <property type="project" value="UniProtKB-SubCell"/>
</dbReference>
<dbReference type="GO" id="GO:0005524">
    <property type="term" value="F:ATP binding"/>
    <property type="evidence" value="ECO:0007669"/>
    <property type="project" value="UniProtKB-UniRule"/>
</dbReference>
<dbReference type="GO" id="GO:0140662">
    <property type="term" value="F:ATP-dependent protein folding chaperone"/>
    <property type="evidence" value="ECO:0007669"/>
    <property type="project" value="InterPro"/>
</dbReference>
<dbReference type="GO" id="GO:0016853">
    <property type="term" value="F:isomerase activity"/>
    <property type="evidence" value="ECO:0007669"/>
    <property type="project" value="UniProtKB-KW"/>
</dbReference>
<dbReference type="GO" id="GO:0051082">
    <property type="term" value="F:unfolded protein binding"/>
    <property type="evidence" value="ECO:0007669"/>
    <property type="project" value="UniProtKB-UniRule"/>
</dbReference>
<dbReference type="GO" id="GO:0042026">
    <property type="term" value="P:protein refolding"/>
    <property type="evidence" value="ECO:0007669"/>
    <property type="project" value="UniProtKB-UniRule"/>
</dbReference>
<dbReference type="CDD" id="cd03344">
    <property type="entry name" value="GroEL"/>
    <property type="match status" value="1"/>
</dbReference>
<dbReference type="FunFam" id="1.10.560.10:FF:000001">
    <property type="entry name" value="60 kDa chaperonin"/>
    <property type="match status" value="1"/>
</dbReference>
<dbReference type="FunFam" id="3.50.7.10:FF:000001">
    <property type="entry name" value="60 kDa chaperonin"/>
    <property type="match status" value="1"/>
</dbReference>
<dbReference type="Gene3D" id="3.50.7.10">
    <property type="entry name" value="GroEL"/>
    <property type="match status" value="1"/>
</dbReference>
<dbReference type="Gene3D" id="1.10.560.10">
    <property type="entry name" value="GroEL-like equatorial domain"/>
    <property type="match status" value="1"/>
</dbReference>
<dbReference type="Gene3D" id="3.30.260.10">
    <property type="entry name" value="TCP-1-like chaperonin intermediate domain"/>
    <property type="match status" value="1"/>
</dbReference>
<dbReference type="HAMAP" id="MF_00600">
    <property type="entry name" value="CH60"/>
    <property type="match status" value="1"/>
</dbReference>
<dbReference type="InterPro" id="IPR018370">
    <property type="entry name" value="Chaperonin_Cpn60_CS"/>
</dbReference>
<dbReference type="InterPro" id="IPR001844">
    <property type="entry name" value="Cpn60/GroEL"/>
</dbReference>
<dbReference type="InterPro" id="IPR002423">
    <property type="entry name" value="Cpn60/GroEL/TCP-1"/>
</dbReference>
<dbReference type="InterPro" id="IPR027409">
    <property type="entry name" value="GroEL-like_apical_dom_sf"/>
</dbReference>
<dbReference type="InterPro" id="IPR027413">
    <property type="entry name" value="GROEL-like_equatorial_sf"/>
</dbReference>
<dbReference type="InterPro" id="IPR027410">
    <property type="entry name" value="TCP-1-like_intermed_sf"/>
</dbReference>
<dbReference type="NCBIfam" id="TIGR02348">
    <property type="entry name" value="GroEL"/>
    <property type="match status" value="1"/>
</dbReference>
<dbReference type="NCBIfam" id="NF000592">
    <property type="entry name" value="PRK00013.1"/>
    <property type="match status" value="1"/>
</dbReference>
<dbReference type="NCBIfam" id="NF009487">
    <property type="entry name" value="PRK12849.1"/>
    <property type="match status" value="1"/>
</dbReference>
<dbReference type="NCBIfam" id="NF009488">
    <property type="entry name" value="PRK12850.1"/>
    <property type="match status" value="1"/>
</dbReference>
<dbReference type="NCBIfam" id="NF009489">
    <property type="entry name" value="PRK12851.1"/>
    <property type="match status" value="1"/>
</dbReference>
<dbReference type="PANTHER" id="PTHR45633">
    <property type="entry name" value="60 KDA HEAT SHOCK PROTEIN, MITOCHONDRIAL"/>
    <property type="match status" value="1"/>
</dbReference>
<dbReference type="Pfam" id="PF00118">
    <property type="entry name" value="Cpn60_TCP1"/>
    <property type="match status" value="1"/>
</dbReference>
<dbReference type="PRINTS" id="PR00298">
    <property type="entry name" value="CHAPERONIN60"/>
</dbReference>
<dbReference type="SUPFAM" id="SSF52029">
    <property type="entry name" value="GroEL apical domain-like"/>
    <property type="match status" value="1"/>
</dbReference>
<dbReference type="SUPFAM" id="SSF48592">
    <property type="entry name" value="GroEL equatorial domain-like"/>
    <property type="match status" value="1"/>
</dbReference>
<dbReference type="SUPFAM" id="SSF54849">
    <property type="entry name" value="GroEL-intermediate domain like"/>
    <property type="match status" value="1"/>
</dbReference>
<dbReference type="PROSITE" id="PS00296">
    <property type="entry name" value="CHAPERONINS_CPN60"/>
    <property type="match status" value="1"/>
</dbReference>
<name>CH60_XANOR</name>
<organism>
    <name type="scientific">Xanthomonas oryzae pv. oryzae (strain KACC10331 / KXO85)</name>
    <dbReference type="NCBI Taxonomy" id="291331"/>
    <lineage>
        <taxon>Bacteria</taxon>
        <taxon>Pseudomonadati</taxon>
        <taxon>Pseudomonadota</taxon>
        <taxon>Gammaproteobacteria</taxon>
        <taxon>Lysobacterales</taxon>
        <taxon>Lysobacteraceae</taxon>
        <taxon>Xanthomonas</taxon>
    </lineage>
</organism>
<evidence type="ECO:0000255" key="1">
    <source>
        <dbReference type="HAMAP-Rule" id="MF_00600"/>
    </source>
</evidence>
<evidence type="ECO:0000256" key="2">
    <source>
        <dbReference type="SAM" id="MobiDB-lite"/>
    </source>
</evidence>
<evidence type="ECO:0007829" key="3">
    <source>
        <dbReference type="PDB" id="6KFV"/>
    </source>
</evidence>
<protein>
    <recommendedName>
        <fullName evidence="1">Chaperonin GroEL</fullName>
        <ecNumber evidence="1">5.6.1.7</ecNumber>
    </recommendedName>
    <alternativeName>
        <fullName evidence="1">60 kDa chaperonin</fullName>
    </alternativeName>
    <alternativeName>
        <fullName evidence="1">Chaperonin-60</fullName>
        <shortName evidence="1">Cpn60</shortName>
    </alternativeName>
</protein>
<keyword id="KW-0002">3D-structure</keyword>
<keyword id="KW-0067">ATP-binding</keyword>
<keyword id="KW-0143">Chaperone</keyword>
<keyword id="KW-0963">Cytoplasm</keyword>
<keyword id="KW-0413">Isomerase</keyword>
<keyword id="KW-0547">Nucleotide-binding</keyword>
<keyword id="KW-1185">Reference proteome</keyword>
<proteinExistence type="evidence at protein level"/>
<reference key="1">
    <citation type="journal article" date="2005" name="Nucleic Acids Res.">
        <title>The genome sequence of Xanthomonas oryzae pathovar oryzae KACC10331, the bacterial blight pathogen of rice.</title>
        <authorList>
            <person name="Lee B.-M."/>
            <person name="Park Y.-J."/>
            <person name="Park D.-S."/>
            <person name="Kang H.-W."/>
            <person name="Kim J.-G."/>
            <person name="Song E.-S."/>
            <person name="Park I.-C."/>
            <person name="Yoon U.-H."/>
            <person name="Hahn J.-H."/>
            <person name="Koo B.-S."/>
            <person name="Lee G.-B."/>
            <person name="Kim H."/>
            <person name="Park H.-S."/>
            <person name="Yoon K.-O."/>
            <person name="Kim J.-H."/>
            <person name="Jung C.-H."/>
            <person name="Koh N.-H."/>
            <person name="Seo J.-S."/>
            <person name="Go S.-J."/>
        </authorList>
    </citation>
    <scope>NUCLEOTIDE SEQUENCE [LARGE SCALE GENOMIC DNA]</scope>
    <source>
        <strain>KACC10331 / KXO85</strain>
    </source>
</reference>